<proteinExistence type="inferred from homology"/>
<keyword id="KW-0067">ATP-binding</keyword>
<keyword id="KW-0414">Isoprene biosynthesis</keyword>
<keyword id="KW-0418">Kinase</keyword>
<keyword id="KW-0547">Nucleotide-binding</keyword>
<keyword id="KW-0808">Transferase</keyword>
<reference key="1">
    <citation type="journal article" date="2011" name="J. Bacteriol.">
        <title>Complete genome sequence of the metabolically versatile plant growth-promoting endophyte, Variovorax paradoxus S110.</title>
        <authorList>
            <person name="Han J.I."/>
            <person name="Choi H.K."/>
            <person name="Lee S.W."/>
            <person name="Orwin P.M."/>
            <person name="Kim J."/>
            <person name="Laroe S.L."/>
            <person name="Kim T.G."/>
            <person name="O'Neil J."/>
            <person name="Leadbetter J.R."/>
            <person name="Lee S.Y."/>
            <person name="Hur C.G."/>
            <person name="Spain J.C."/>
            <person name="Ovchinnikova G."/>
            <person name="Goodwin L."/>
            <person name="Han C."/>
        </authorList>
    </citation>
    <scope>NUCLEOTIDE SEQUENCE [LARGE SCALE GENOMIC DNA]</scope>
    <source>
        <strain>S110</strain>
    </source>
</reference>
<gene>
    <name evidence="1" type="primary">ispE</name>
    <name type="ordered locus">Vapar_4344</name>
</gene>
<protein>
    <recommendedName>
        <fullName evidence="1">4-diphosphocytidyl-2-C-methyl-D-erythritol kinase</fullName>
        <shortName evidence="1">CMK</shortName>
        <ecNumber evidence="1">2.7.1.148</ecNumber>
    </recommendedName>
    <alternativeName>
        <fullName evidence="1">4-(cytidine-5'-diphospho)-2-C-methyl-D-erythritol kinase</fullName>
    </alternativeName>
</protein>
<sequence length="296" mass="31713">MKAIYDLPAPAKLNLFLHITGRREDGYHLLQSVFMLIDWCDTLHVELRSDGQLSREDLTTELPPDDLVLRAARALQAHAAPGQGAHIGIAKQVPAQAGMGGGSSDAATCLLALNRLWGLDLPLSRLAEIGVQLGADVPFFLGGRNAWVEGIGEKIRPVDIPSARFVVAKPPQGLDTKLIFSAPDLQRATPVAIISGFAADSEQLEAPNPESSAFKVFDFGHNDLQPVAQRLCPAVTDAIEWLGAQGLKARMTGSGSSVFAKMPQGPQEAELAKAPPGWQVRQCSNLAVHPLWGWAT</sequence>
<name>ISPE_VARPS</name>
<evidence type="ECO:0000255" key="1">
    <source>
        <dbReference type="HAMAP-Rule" id="MF_00061"/>
    </source>
</evidence>
<feature type="chain" id="PRO_1000202390" description="4-diphosphocytidyl-2-C-methyl-D-erythritol kinase">
    <location>
        <begin position="1"/>
        <end position="296"/>
    </location>
</feature>
<feature type="active site" evidence="1">
    <location>
        <position position="12"/>
    </location>
</feature>
<feature type="active site" evidence="1">
    <location>
        <position position="136"/>
    </location>
</feature>
<feature type="binding site" evidence="1">
    <location>
        <begin position="94"/>
        <end position="104"/>
    </location>
    <ligand>
        <name>ATP</name>
        <dbReference type="ChEBI" id="CHEBI:30616"/>
    </ligand>
</feature>
<accession>C5CYZ4</accession>
<comment type="function">
    <text evidence="1">Catalyzes the phosphorylation of the position 2 hydroxy group of 4-diphosphocytidyl-2C-methyl-D-erythritol.</text>
</comment>
<comment type="catalytic activity">
    <reaction evidence="1">
        <text>4-CDP-2-C-methyl-D-erythritol + ATP = 4-CDP-2-C-methyl-D-erythritol 2-phosphate + ADP + H(+)</text>
        <dbReference type="Rhea" id="RHEA:18437"/>
        <dbReference type="ChEBI" id="CHEBI:15378"/>
        <dbReference type="ChEBI" id="CHEBI:30616"/>
        <dbReference type="ChEBI" id="CHEBI:57823"/>
        <dbReference type="ChEBI" id="CHEBI:57919"/>
        <dbReference type="ChEBI" id="CHEBI:456216"/>
        <dbReference type="EC" id="2.7.1.148"/>
    </reaction>
</comment>
<comment type="pathway">
    <text evidence="1">Isoprenoid biosynthesis; isopentenyl diphosphate biosynthesis via DXP pathway; isopentenyl diphosphate from 1-deoxy-D-xylulose 5-phosphate: step 3/6.</text>
</comment>
<comment type="similarity">
    <text evidence="1">Belongs to the GHMP kinase family. IspE subfamily.</text>
</comment>
<dbReference type="EC" id="2.7.1.148" evidence="1"/>
<dbReference type="EMBL" id="CP001635">
    <property type="protein sequence ID" value="ACS20955.1"/>
    <property type="molecule type" value="Genomic_DNA"/>
</dbReference>
<dbReference type="SMR" id="C5CYZ4"/>
<dbReference type="STRING" id="543728.Vapar_4344"/>
<dbReference type="KEGG" id="vap:Vapar_4344"/>
<dbReference type="eggNOG" id="COG1947">
    <property type="taxonomic scope" value="Bacteria"/>
</dbReference>
<dbReference type="HOGENOM" id="CLU_053057_3_0_4"/>
<dbReference type="OrthoDB" id="9809438at2"/>
<dbReference type="UniPathway" id="UPA00056">
    <property type="reaction ID" value="UER00094"/>
</dbReference>
<dbReference type="GO" id="GO:0050515">
    <property type="term" value="F:4-(cytidine 5'-diphospho)-2-C-methyl-D-erythritol kinase activity"/>
    <property type="evidence" value="ECO:0007669"/>
    <property type="project" value="UniProtKB-UniRule"/>
</dbReference>
<dbReference type="GO" id="GO:0005524">
    <property type="term" value="F:ATP binding"/>
    <property type="evidence" value="ECO:0007669"/>
    <property type="project" value="UniProtKB-UniRule"/>
</dbReference>
<dbReference type="GO" id="GO:0019288">
    <property type="term" value="P:isopentenyl diphosphate biosynthetic process, methylerythritol 4-phosphate pathway"/>
    <property type="evidence" value="ECO:0007669"/>
    <property type="project" value="UniProtKB-UniRule"/>
</dbReference>
<dbReference type="GO" id="GO:0016114">
    <property type="term" value="P:terpenoid biosynthetic process"/>
    <property type="evidence" value="ECO:0007669"/>
    <property type="project" value="InterPro"/>
</dbReference>
<dbReference type="Gene3D" id="3.30.230.10">
    <property type="match status" value="1"/>
</dbReference>
<dbReference type="Gene3D" id="3.30.70.890">
    <property type="entry name" value="GHMP kinase, C-terminal domain"/>
    <property type="match status" value="1"/>
</dbReference>
<dbReference type="HAMAP" id="MF_00061">
    <property type="entry name" value="IspE"/>
    <property type="match status" value="1"/>
</dbReference>
<dbReference type="InterPro" id="IPR013750">
    <property type="entry name" value="GHMP_kinase_C_dom"/>
</dbReference>
<dbReference type="InterPro" id="IPR036554">
    <property type="entry name" value="GHMP_kinase_C_sf"/>
</dbReference>
<dbReference type="InterPro" id="IPR006204">
    <property type="entry name" value="GHMP_kinase_N_dom"/>
</dbReference>
<dbReference type="InterPro" id="IPR004424">
    <property type="entry name" value="IspE"/>
</dbReference>
<dbReference type="InterPro" id="IPR020568">
    <property type="entry name" value="Ribosomal_Su5_D2-typ_SF"/>
</dbReference>
<dbReference type="InterPro" id="IPR014721">
    <property type="entry name" value="Ribsml_uS5_D2-typ_fold_subgr"/>
</dbReference>
<dbReference type="NCBIfam" id="TIGR00154">
    <property type="entry name" value="ispE"/>
    <property type="match status" value="1"/>
</dbReference>
<dbReference type="PANTHER" id="PTHR43527">
    <property type="entry name" value="4-DIPHOSPHOCYTIDYL-2-C-METHYL-D-ERYTHRITOL KINASE, CHLOROPLASTIC"/>
    <property type="match status" value="1"/>
</dbReference>
<dbReference type="PANTHER" id="PTHR43527:SF2">
    <property type="entry name" value="4-DIPHOSPHOCYTIDYL-2-C-METHYL-D-ERYTHRITOL KINASE, CHLOROPLASTIC"/>
    <property type="match status" value="1"/>
</dbReference>
<dbReference type="Pfam" id="PF08544">
    <property type="entry name" value="GHMP_kinases_C"/>
    <property type="match status" value="1"/>
</dbReference>
<dbReference type="Pfam" id="PF00288">
    <property type="entry name" value="GHMP_kinases_N"/>
    <property type="match status" value="1"/>
</dbReference>
<dbReference type="PIRSF" id="PIRSF010376">
    <property type="entry name" value="IspE"/>
    <property type="match status" value="1"/>
</dbReference>
<dbReference type="SUPFAM" id="SSF55060">
    <property type="entry name" value="GHMP Kinase, C-terminal domain"/>
    <property type="match status" value="1"/>
</dbReference>
<dbReference type="SUPFAM" id="SSF54211">
    <property type="entry name" value="Ribosomal protein S5 domain 2-like"/>
    <property type="match status" value="1"/>
</dbReference>
<organism>
    <name type="scientific">Variovorax paradoxus (strain S110)</name>
    <dbReference type="NCBI Taxonomy" id="543728"/>
    <lineage>
        <taxon>Bacteria</taxon>
        <taxon>Pseudomonadati</taxon>
        <taxon>Pseudomonadota</taxon>
        <taxon>Betaproteobacteria</taxon>
        <taxon>Burkholderiales</taxon>
        <taxon>Comamonadaceae</taxon>
        <taxon>Variovorax</taxon>
    </lineage>
</organism>